<comment type="function">
    <text evidence="1">Heme-binding protein able to scavenge peroxynitrite and to protect free L-tyrosine against peroxynitrite-mediated nitration, by acting as a peroxynitrite isomerase that converts peroxynitrite to nitrate. Therefore, this protein likely plays a role in peroxynitrite sensing and in the detoxification of reactive nitrogen and oxygen species (RNS and ROS, respectively). Is able to bind nitric oxide (NO) in vitro, but may act as a sensor of peroxynitrite levels in vivo.</text>
</comment>
<comment type="catalytic activity">
    <reaction evidence="1">
        <text>peroxynitrite = nitrate</text>
        <dbReference type="Rhea" id="RHEA:63116"/>
        <dbReference type="ChEBI" id="CHEBI:17632"/>
        <dbReference type="ChEBI" id="CHEBI:25941"/>
    </reaction>
    <physiologicalReaction direction="left-to-right" evidence="1">
        <dbReference type="Rhea" id="RHEA:63117"/>
    </physiologicalReaction>
</comment>
<comment type="cofactor">
    <cofactor evidence="1">
        <name>heme b</name>
        <dbReference type="ChEBI" id="CHEBI:60344"/>
    </cofactor>
    <text evidence="1">Binds 1 heme b group per subunit, that coordinates a highly solvent-exposed Fe(III) atom.</text>
</comment>
<comment type="pathway">
    <text evidence="1">Nitrogen metabolism.</text>
</comment>
<comment type="subunit">
    <text evidence="1">Homodimer.</text>
</comment>
<comment type="domain">
    <text evidence="1">Forms a 10-stranded antiparallel beta-barrel structure able to accommodate a hydrophobic ligand in its interior. In fact, this fold hosts the heme group, which is located in a wide surface cleft.</text>
</comment>
<comment type="similarity">
    <text evidence="1">Belongs to the nitrobindin family.</text>
</comment>
<keyword id="KW-0349">Heme</keyword>
<keyword id="KW-0408">Iron</keyword>
<keyword id="KW-0413">Isomerase</keyword>
<keyword id="KW-0479">Metal-binding</keyword>
<dbReference type="EC" id="5.99.-.-" evidence="1"/>
<dbReference type="EMBL" id="CP000656">
    <property type="protein sequence ID" value="ABP44124.1"/>
    <property type="molecule type" value="Genomic_DNA"/>
</dbReference>
<dbReference type="SMR" id="A4T7H3"/>
<dbReference type="STRING" id="350054.Mflv_1642"/>
<dbReference type="KEGG" id="mgi:Mflv_1642"/>
<dbReference type="eggNOG" id="COG4044">
    <property type="taxonomic scope" value="Bacteria"/>
</dbReference>
<dbReference type="HOGENOM" id="CLU_085483_0_0_11"/>
<dbReference type="OrthoDB" id="4804006at2"/>
<dbReference type="GO" id="GO:0020037">
    <property type="term" value="F:heme binding"/>
    <property type="evidence" value="ECO:0007669"/>
    <property type="project" value="UniProtKB-UniRule"/>
</dbReference>
<dbReference type="GO" id="GO:0046872">
    <property type="term" value="F:metal ion binding"/>
    <property type="evidence" value="ECO:0007669"/>
    <property type="project" value="UniProtKB-KW"/>
</dbReference>
<dbReference type="GO" id="GO:0062213">
    <property type="term" value="F:peroxynitrite isomerase activity"/>
    <property type="evidence" value="ECO:0007669"/>
    <property type="project" value="UniProtKB-UniRule"/>
</dbReference>
<dbReference type="CDD" id="cd07828">
    <property type="entry name" value="lipocalin_heme-bd-THAP4-like"/>
    <property type="match status" value="1"/>
</dbReference>
<dbReference type="Gene3D" id="2.40.128.20">
    <property type="match status" value="1"/>
</dbReference>
<dbReference type="HAMAP" id="MF_01297">
    <property type="entry name" value="nitrobindin"/>
    <property type="match status" value="1"/>
</dbReference>
<dbReference type="InterPro" id="IPR012674">
    <property type="entry name" value="Calycin"/>
</dbReference>
<dbReference type="InterPro" id="IPR022939">
    <property type="entry name" value="Nb(III)_bact/plant"/>
</dbReference>
<dbReference type="InterPro" id="IPR045165">
    <property type="entry name" value="Nitrobindin"/>
</dbReference>
<dbReference type="InterPro" id="IPR014878">
    <property type="entry name" value="THAP4-like_heme-bd"/>
</dbReference>
<dbReference type="PANTHER" id="PTHR15854:SF4">
    <property type="entry name" value="PEROXYNITRITE ISOMERASE THAP4"/>
    <property type="match status" value="1"/>
</dbReference>
<dbReference type="PANTHER" id="PTHR15854">
    <property type="entry name" value="THAP4 PROTEIN"/>
    <property type="match status" value="1"/>
</dbReference>
<dbReference type="Pfam" id="PF08768">
    <property type="entry name" value="THAP4_heme-bd"/>
    <property type="match status" value="1"/>
</dbReference>
<dbReference type="SUPFAM" id="SSF50814">
    <property type="entry name" value="Lipocalins"/>
    <property type="match status" value="1"/>
</dbReference>
<proteinExistence type="inferred from homology"/>
<feature type="chain" id="PRO_0000356919" description="Peroxynitrite isomerase 2">
    <location>
        <begin position="1"/>
        <end position="209"/>
    </location>
</feature>
<feature type="short sequence motif" description="GXWXGXG" evidence="1">
    <location>
        <begin position="56"/>
        <end position="62"/>
    </location>
</feature>
<feature type="binding site" evidence="1">
    <location>
        <position position="172"/>
    </location>
    <ligand>
        <name>heme b</name>
        <dbReference type="ChEBI" id="CHEBI:60344"/>
    </ligand>
</feature>
<feature type="binding site" description="axial binding residue" evidence="1">
    <location>
        <position position="199"/>
    </location>
    <ligand>
        <name>heme b</name>
        <dbReference type="ChEBI" id="CHEBI:60344"/>
    </ligand>
    <ligandPart>
        <name>Fe</name>
        <dbReference type="ChEBI" id="CHEBI:18248"/>
    </ligandPart>
</feature>
<name>NB2_MYCGI</name>
<protein>
    <recommendedName>
        <fullName>Peroxynitrite isomerase 2</fullName>
        <ecNumber evidence="1">5.99.-.-</ecNumber>
    </recommendedName>
    <alternativeName>
        <fullName>Ferric nitrobindin</fullName>
        <shortName>Nb(III)</shortName>
    </alternativeName>
</protein>
<sequence>MTSGDDAVAAAAERARQTAARNIPVFDDLPLPSDTANLREGVDLDDALLALLPLIGVWRGEGEGRDAHGDYRFGQQIIVSHDGADYLNWEARSWRLDDGGDYDRRDLRETGFWRFVNDPNDPGESQAIELLLAHSSGYIELFYGRPLNQASWELVTDALARSKSGVLVGGAKRLYGIIEGGDLAYVEERVDADGGLVPHLSARLSRFVG</sequence>
<organism>
    <name type="scientific">Mycolicibacterium gilvum (strain PYR-GCK)</name>
    <name type="common">Mycobacterium gilvum (strain PYR-GCK)</name>
    <dbReference type="NCBI Taxonomy" id="350054"/>
    <lineage>
        <taxon>Bacteria</taxon>
        <taxon>Bacillati</taxon>
        <taxon>Actinomycetota</taxon>
        <taxon>Actinomycetes</taxon>
        <taxon>Mycobacteriales</taxon>
        <taxon>Mycobacteriaceae</taxon>
        <taxon>Mycolicibacterium</taxon>
    </lineage>
</organism>
<gene>
    <name type="ordered locus">Mflv_1642</name>
</gene>
<accession>A4T7H3</accession>
<reference key="1">
    <citation type="submission" date="2007-04" db="EMBL/GenBank/DDBJ databases">
        <title>Complete sequence of chromosome of Mycobacterium gilvum PYR-GCK.</title>
        <authorList>
            <consortium name="US DOE Joint Genome Institute"/>
            <person name="Copeland A."/>
            <person name="Lucas S."/>
            <person name="Lapidus A."/>
            <person name="Barry K."/>
            <person name="Detter J.C."/>
            <person name="Glavina del Rio T."/>
            <person name="Hammon N."/>
            <person name="Israni S."/>
            <person name="Dalin E."/>
            <person name="Tice H."/>
            <person name="Pitluck S."/>
            <person name="Chain P."/>
            <person name="Malfatti S."/>
            <person name="Shin M."/>
            <person name="Vergez L."/>
            <person name="Schmutz J."/>
            <person name="Larimer F."/>
            <person name="Land M."/>
            <person name="Hauser L."/>
            <person name="Kyrpides N."/>
            <person name="Mikhailova N."/>
            <person name="Miller C."/>
            <person name="Richardson P."/>
        </authorList>
    </citation>
    <scope>NUCLEOTIDE SEQUENCE [LARGE SCALE GENOMIC DNA]</scope>
    <source>
        <strain>PYR-GCK</strain>
    </source>
</reference>
<evidence type="ECO:0000255" key="1">
    <source>
        <dbReference type="HAMAP-Rule" id="MF_01297"/>
    </source>
</evidence>